<protein>
    <recommendedName>
        <fullName evidence="1">LexA repressor</fullName>
        <ecNumber evidence="1">3.4.21.88</ecNumber>
    </recommendedName>
</protein>
<reference key="1">
    <citation type="submission" date="2008-05" db="EMBL/GenBank/DDBJ databases">
        <title>Complete sequence of chromosome 1 of Ralstonia pickettii 12J.</title>
        <authorList>
            <person name="Lucas S."/>
            <person name="Copeland A."/>
            <person name="Lapidus A."/>
            <person name="Glavina del Rio T."/>
            <person name="Dalin E."/>
            <person name="Tice H."/>
            <person name="Bruce D."/>
            <person name="Goodwin L."/>
            <person name="Pitluck S."/>
            <person name="Meincke L."/>
            <person name="Brettin T."/>
            <person name="Detter J.C."/>
            <person name="Han C."/>
            <person name="Kuske C.R."/>
            <person name="Schmutz J."/>
            <person name="Larimer F."/>
            <person name="Land M."/>
            <person name="Hauser L."/>
            <person name="Kyrpides N."/>
            <person name="Mikhailova N."/>
            <person name="Marsh T."/>
            <person name="Richardson P."/>
        </authorList>
    </citation>
    <scope>NUCLEOTIDE SEQUENCE [LARGE SCALE GENOMIC DNA]</scope>
    <source>
        <strain>12J</strain>
    </source>
</reference>
<name>LEXA_RALPJ</name>
<feature type="chain" id="PRO_1000089585" description="LexA repressor">
    <location>
        <begin position="1"/>
        <end position="216"/>
    </location>
</feature>
<feature type="DNA-binding region" description="H-T-H motif" evidence="1">
    <location>
        <begin position="28"/>
        <end position="48"/>
    </location>
</feature>
<feature type="active site" description="For autocatalytic cleavage activity" evidence="1">
    <location>
        <position position="134"/>
    </location>
</feature>
<feature type="active site" description="For autocatalytic cleavage activity" evidence="1">
    <location>
        <position position="171"/>
    </location>
</feature>
<feature type="site" description="Cleavage; by autolysis" evidence="1">
    <location>
        <begin position="99"/>
        <end position="100"/>
    </location>
</feature>
<proteinExistence type="inferred from homology"/>
<sequence length="216" mass="23616">MATLTPRQQQIYDLIRQTIQRTGFPPTRAEIAAEFGFSSPNAAEEHLRALARKGVIELTPGASRGIRLRAAGDTAQHQFSLPSMGLMQLTLPLVGRVAAGSPILAAEHIDRQYQVDPSLFSAQPDFLLKVRGMSMRDAGILDGDLLAVQRASEATNGKIVVARLGDDVTVKRFQRKGRHVELIAENPDFEPIHVDLDRDEFHLEGLAVGLIRPAAP</sequence>
<accession>B2UAG1</accession>
<evidence type="ECO:0000255" key="1">
    <source>
        <dbReference type="HAMAP-Rule" id="MF_00015"/>
    </source>
</evidence>
<comment type="function">
    <text evidence="1">Represses a number of genes involved in the response to DNA damage (SOS response), including recA and lexA. In the presence of single-stranded DNA, RecA interacts with LexA causing an autocatalytic cleavage which disrupts the DNA-binding part of LexA, leading to derepression of the SOS regulon and eventually DNA repair.</text>
</comment>
<comment type="catalytic activity">
    <reaction evidence="1">
        <text>Hydrolysis of Ala-|-Gly bond in repressor LexA.</text>
        <dbReference type="EC" id="3.4.21.88"/>
    </reaction>
</comment>
<comment type="subunit">
    <text evidence="1">Homodimer.</text>
</comment>
<comment type="similarity">
    <text evidence="1">Belongs to the peptidase S24 family.</text>
</comment>
<gene>
    <name evidence="1" type="primary">lexA</name>
    <name type="ordered locus">Rpic_1179</name>
</gene>
<dbReference type="EC" id="3.4.21.88" evidence="1"/>
<dbReference type="EMBL" id="CP001068">
    <property type="protein sequence ID" value="ACD26323.1"/>
    <property type="molecule type" value="Genomic_DNA"/>
</dbReference>
<dbReference type="SMR" id="B2UAG1"/>
<dbReference type="STRING" id="402626.Rpic_1179"/>
<dbReference type="MEROPS" id="S24.001"/>
<dbReference type="KEGG" id="rpi:Rpic_1179"/>
<dbReference type="PATRIC" id="fig|402626.5.peg.2380"/>
<dbReference type="eggNOG" id="COG1974">
    <property type="taxonomic scope" value="Bacteria"/>
</dbReference>
<dbReference type="HOGENOM" id="CLU_066192_45_3_4"/>
<dbReference type="GO" id="GO:0003677">
    <property type="term" value="F:DNA binding"/>
    <property type="evidence" value="ECO:0007669"/>
    <property type="project" value="UniProtKB-UniRule"/>
</dbReference>
<dbReference type="GO" id="GO:0004252">
    <property type="term" value="F:serine-type endopeptidase activity"/>
    <property type="evidence" value="ECO:0007669"/>
    <property type="project" value="UniProtKB-UniRule"/>
</dbReference>
<dbReference type="GO" id="GO:0006281">
    <property type="term" value="P:DNA repair"/>
    <property type="evidence" value="ECO:0007669"/>
    <property type="project" value="UniProtKB-UniRule"/>
</dbReference>
<dbReference type="GO" id="GO:0006260">
    <property type="term" value="P:DNA replication"/>
    <property type="evidence" value="ECO:0007669"/>
    <property type="project" value="UniProtKB-UniRule"/>
</dbReference>
<dbReference type="GO" id="GO:0045892">
    <property type="term" value="P:negative regulation of DNA-templated transcription"/>
    <property type="evidence" value="ECO:0007669"/>
    <property type="project" value="UniProtKB-UniRule"/>
</dbReference>
<dbReference type="GO" id="GO:0006508">
    <property type="term" value="P:proteolysis"/>
    <property type="evidence" value="ECO:0007669"/>
    <property type="project" value="InterPro"/>
</dbReference>
<dbReference type="GO" id="GO:0009432">
    <property type="term" value="P:SOS response"/>
    <property type="evidence" value="ECO:0007669"/>
    <property type="project" value="UniProtKB-UniRule"/>
</dbReference>
<dbReference type="CDD" id="cd06529">
    <property type="entry name" value="S24_LexA-like"/>
    <property type="match status" value="1"/>
</dbReference>
<dbReference type="FunFam" id="1.10.10.10:FF:000009">
    <property type="entry name" value="LexA repressor"/>
    <property type="match status" value="1"/>
</dbReference>
<dbReference type="FunFam" id="2.10.109.10:FF:000001">
    <property type="entry name" value="LexA repressor"/>
    <property type="match status" value="1"/>
</dbReference>
<dbReference type="Gene3D" id="2.10.109.10">
    <property type="entry name" value="Umud Fragment, subunit A"/>
    <property type="match status" value="1"/>
</dbReference>
<dbReference type="Gene3D" id="1.10.10.10">
    <property type="entry name" value="Winged helix-like DNA-binding domain superfamily/Winged helix DNA-binding domain"/>
    <property type="match status" value="1"/>
</dbReference>
<dbReference type="HAMAP" id="MF_00015">
    <property type="entry name" value="LexA"/>
    <property type="match status" value="1"/>
</dbReference>
<dbReference type="InterPro" id="IPR006200">
    <property type="entry name" value="LexA"/>
</dbReference>
<dbReference type="InterPro" id="IPR039418">
    <property type="entry name" value="LexA-like"/>
</dbReference>
<dbReference type="InterPro" id="IPR036286">
    <property type="entry name" value="LexA/Signal_pep-like_sf"/>
</dbReference>
<dbReference type="InterPro" id="IPR006199">
    <property type="entry name" value="LexA_DNA-bd_dom"/>
</dbReference>
<dbReference type="InterPro" id="IPR050077">
    <property type="entry name" value="LexA_repressor"/>
</dbReference>
<dbReference type="InterPro" id="IPR006197">
    <property type="entry name" value="Peptidase_S24_LexA"/>
</dbReference>
<dbReference type="InterPro" id="IPR015927">
    <property type="entry name" value="Peptidase_S24_S26A/B/C"/>
</dbReference>
<dbReference type="InterPro" id="IPR036388">
    <property type="entry name" value="WH-like_DNA-bd_sf"/>
</dbReference>
<dbReference type="InterPro" id="IPR036390">
    <property type="entry name" value="WH_DNA-bd_sf"/>
</dbReference>
<dbReference type="NCBIfam" id="TIGR00498">
    <property type="entry name" value="lexA"/>
    <property type="match status" value="1"/>
</dbReference>
<dbReference type="PANTHER" id="PTHR33516">
    <property type="entry name" value="LEXA REPRESSOR"/>
    <property type="match status" value="1"/>
</dbReference>
<dbReference type="PANTHER" id="PTHR33516:SF2">
    <property type="entry name" value="LEXA REPRESSOR-RELATED"/>
    <property type="match status" value="1"/>
</dbReference>
<dbReference type="Pfam" id="PF01726">
    <property type="entry name" value="LexA_DNA_bind"/>
    <property type="match status" value="1"/>
</dbReference>
<dbReference type="Pfam" id="PF00717">
    <property type="entry name" value="Peptidase_S24"/>
    <property type="match status" value="1"/>
</dbReference>
<dbReference type="PRINTS" id="PR00726">
    <property type="entry name" value="LEXASERPTASE"/>
</dbReference>
<dbReference type="SUPFAM" id="SSF51306">
    <property type="entry name" value="LexA/Signal peptidase"/>
    <property type="match status" value="1"/>
</dbReference>
<dbReference type="SUPFAM" id="SSF46785">
    <property type="entry name" value="Winged helix' DNA-binding domain"/>
    <property type="match status" value="1"/>
</dbReference>
<organism>
    <name type="scientific">Ralstonia pickettii (strain 12J)</name>
    <dbReference type="NCBI Taxonomy" id="402626"/>
    <lineage>
        <taxon>Bacteria</taxon>
        <taxon>Pseudomonadati</taxon>
        <taxon>Pseudomonadota</taxon>
        <taxon>Betaproteobacteria</taxon>
        <taxon>Burkholderiales</taxon>
        <taxon>Burkholderiaceae</taxon>
        <taxon>Ralstonia</taxon>
    </lineage>
</organism>
<keyword id="KW-0068">Autocatalytic cleavage</keyword>
<keyword id="KW-0227">DNA damage</keyword>
<keyword id="KW-0234">DNA repair</keyword>
<keyword id="KW-0235">DNA replication</keyword>
<keyword id="KW-0238">DNA-binding</keyword>
<keyword id="KW-0378">Hydrolase</keyword>
<keyword id="KW-0678">Repressor</keyword>
<keyword id="KW-0742">SOS response</keyword>
<keyword id="KW-0804">Transcription</keyword>
<keyword id="KW-0805">Transcription regulation</keyword>